<accession>O35867</accession>
<keyword id="KW-0002">3D-structure</keyword>
<keyword id="KW-0009">Actin-binding</keyword>
<keyword id="KW-0175">Coiled coil</keyword>
<keyword id="KW-0963">Cytoplasm</keyword>
<keyword id="KW-0206">Cytoskeleton</keyword>
<keyword id="KW-0217">Developmental protein</keyword>
<keyword id="KW-0221">Differentiation</keyword>
<keyword id="KW-0903">Direct protein sequencing</keyword>
<keyword id="KW-0524">Neurogenesis</keyword>
<keyword id="KW-0597">Phosphoprotein</keyword>
<keyword id="KW-1185">Reference proteome</keyword>
<keyword id="KW-0770">Synapse</keyword>
<keyword id="KW-0771">Synaptosome</keyword>
<name>NEB1_RAT</name>
<organism>
    <name type="scientific">Rattus norvegicus</name>
    <name type="common">Rat</name>
    <dbReference type="NCBI Taxonomy" id="10116"/>
    <lineage>
        <taxon>Eukaryota</taxon>
        <taxon>Metazoa</taxon>
        <taxon>Chordata</taxon>
        <taxon>Craniata</taxon>
        <taxon>Vertebrata</taxon>
        <taxon>Euteleostomi</taxon>
        <taxon>Mammalia</taxon>
        <taxon>Eutheria</taxon>
        <taxon>Euarchontoglires</taxon>
        <taxon>Glires</taxon>
        <taxon>Rodentia</taxon>
        <taxon>Myomorpha</taxon>
        <taxon>Muroidea</taxon>
        <taxon>Muridae</taxon>
        <taxon>Murinae</taxon>
        <taxon>Rattus</taxon>
    </lineage>
</organism>
<feature type="chain" id="PRO_0000071508" description="Neurabin-1">
    <location>
        <begin position="1"/>
        <end position="1095"/>
    </location>
</feature>
<feature type="domain" description="PDZ" evidence="3">
    <location>
        <begin position="505"/>
        <end position="593"/>
    </location>
</feature>
<feature type="domain" description="SAM" evidence="4">
    <location>
        <begin position="989"/>
        <end position="1052"/>
    </location>
</feature>
<feature type="region of interest" description="Actin-binding">
    <location>
        <begin position="1"/>
        <end position="144"/>
    </location>
</feature>
<feature type="region of interest" description="Disordered" evidence="5">
    <location>
        <begin position="1"/>
        <end position="65"/>
    </location>
</feature>
<feature type="region of interest" description="Disordered" evidence="5">
    <location>
        <begin position="85"/>
        <end position="111"/>
    </location>
</feature>
<feature type="region of interest" description="Disordered" evidence="5">
    <location>
        <begin position="125"/>
        <end position="394"/>
    </location>
</feature>
<feature type="region of interest" description="Interaction with protein phosphatase 1">
    <location>
        <begin position="426"/>
        <end position="503"/>
    </location>
</feature>
<feature type="region of interest" description="Interaction with TGN38" evidence="7">
    <location>
        <begin position="598"/>
        <end position="1091"/>
    </location>
</feature>
<feature type="region of interest" description="Disordered" evidence="5">
    <location>
        <begin position="874"/>
        <end position="953"/>
    </location>
</feature>
<feature type="region of interest" description="Disordered" evidence="5">
    <location>
        <begin position="1050"/>
        <end position="1095"/>
    </location>
</feature>
<feature type="coiled-coil region" evidence="2">
    <location>
        <begin position="598"/>
        <end position="628"/>
    </location>
</feature>
<feature type="coiled-coil region" evidence="2">
    <location>
        <begin position="674"/>
        <end position="825"/>
    </location>
</feature>
<feature type="coiled-coil region" evidence="2">
    <location>
        <begin position="1036"/>
        <end position="1091"/>
    </location>
</feature>
<feature type="compositionally biased region" description="Basic and acidic residues" evidence="5">
    <location>
        <begin position="1"/>
        <end position="12"/>
    </location>
</feature>
<feature type="compositionally biased region" description="Basic and acidic residues" evidence="5">
    <location>
        <begin position="33"/>
        <end position="49"/>
    </location>
</feature>
<feature type="compositionally biased region" description="Basic and acidic residues" evidence="5">
    <location>
        <begin position="140"/>
        <end position="151"/>
    </location>
</feature>
<feature type="compositionally biased region" description="Polar residues" evidence="5">
    <location>
        <begin position="178"/>
        <end position="214"/>
    </location>
</feature>
<feature type="compositionally biased region" description="Polar residues" evidence="5">
    <location>
        <begin position="326"/>
        <end position="338"/>
    </location>
</feature>
<feature type="compositionally biased region" description="Polar residues" evidence="5">
    <location>
        <begin position="922"/>
        <end position="937"/>
    </location>
</feature>
<feature type="compositionally biased region" description="Basic and acidic residues" evidence="5">
    <location>
        <begin position="1050"/>
        <end position="1079"/>
    </location>
</feature>
<feature type="modified residue" description="Phosphoserine" evidence="9">
    <location>
        <position position="192"/>
    </location>
</feature>
<feature type="modified residue" description="Phosphothreonine" evidence="9">
    <location>
        <position position="312"/>
    </location>
</feature>
<feature type="modified residue" description="Phosphoserine" evidence="1">
    <location>
        <position position="338"/>
    </location>
</feature>
<feature type="modified residue" description="Phosphoserine" evidence="9">
    <location>
        <position position="372"/>
    </location>
</feature>
<feature type="modified residue" description="Phosphoserine; by PKA" evidence="6">
    <location>
        <position position="461"/>
    </location>
</feature>
<feature type="modified residue" description="Phosphoserine" evidence="1">
    <location>
        <position position="841"/>
    </location>
</feature>
<feature type="modified residue" description="Phosphoserine" evidence="9">
    <location>
        <position position="916"/>
    </location>
</feature>
<feature type="modified residue" description="Phosphoserine" evidence="9">
    <location>
        <position position="929"/>
    </location>
</feature>
<feature type="modified residue" description="Phosphoserine" evidence="9">
    <location>
        <position position="957"/>
    </location>
</feature>
<feature type="modified residue" description="Phosphoserine" evidence="9">
    <location>
        <position position="958"/>
    </location>
</feature>
<feature type="modified residue" description="Phosphoserine" evidence="9">
    <location>
        <position position="961"/>
    </location>
</feature>
<feature type="modified residue" description="Phosphoserine" evidence="9">
    <location>
        <position position="975"/>
    </location>
</feature>
<feature type="mutagenesis site" description="35-fold decrease in inhibition of PP1-alpha." evidence="6">
    <original>S</original>
    <variation>E</variation>
    <location>
        <position position="461"/>
    </location>
</feature>
<feature type="mutagenesis site" description="Abolishes P70-S6K binding." evidence="6">
    <original>GI</original>
    <variation>AA</variation>
    <location>
        <begin position="516"/>
        <end position="517"/>
    </location>
</feature>
<feature type="strand" evidence="12">
    <location>
        <begin position="440"/>
        <end position="443"/>
    </location>
</feature>
<feature type="strand" evidence="12">
    <location>
        <begin position="465"/>
        <end position="470"/>
    </location>
</feature>
<feature type="turn" evidence="12">
    <location>
        <begin position="473"/>
        <end position="475"/>
    </location>
</feature>
<feature type="helix" evidence="12">
    <location>
        <begin position="485"/>
        <end position="498"/>
    </location>
</feature>
<feature type="strand" evidence="12">
    <location>
        <begin position="501"/>
        <end position="509"/>
    </location>
</feature>
<feature type="strand" evidence="12">
    <location>
        <begin position="516"/>
        <end position="522"/>
    </location>
</feature>
<feature type="strand" evidence="10">
    <location>
        <begin position="527"/>
        <end position="529"/>
    </location>
</feature>
<feature type="strand" evidence="12">
    <location>
        <begin position="530"/>
        <end position="540"/>
    </location>
</feature>
<feature type="helix" evidence="12">
    <location>
        <begin position="545"/>
        <end position="549"/>
    </location>
</feature>
<feature type="strand" evidence="10">
    <location>
        <begin position="550"/>
        <end position="552"/>
    </location>
</feature>
<feature type="strand" evidence="12">
    <location>
        <begin position="557"/>
        <end position="561"/>
    </location>
</feature>
<feature type="helix" evidence="12">
    <location>
        <begin position="571"/>
        <end position="580"/>
    </location>
</feature>
<feature type="strand" evidence="12">
    <location>
        <begin position="583"/>
        <end position="591"/>
    </location>
</feature>
<feature type="helix" evidence="11">
    <location>
        <begin position="986"/>
        <end position="988"/>
    </location>
</feature>
<feature type="helix" evidence="11">
    <location>
        <begin position="992"/>
        <end position="994"/>
    </location>
</feature>
<feature type="helix" evidence="11">
    <location>
        <begin position="995"/>
        <end position="1000"/>
    </location>
</feature>
<feature type="turn" evidence="11">
    <location>
        <begin position="1001"/>
        <end position="1003"/>
    </location>
</feature>
<feature type="helix" evidence="11">
    <location>
        <begin position="1004"/>
        <end position="1010"/>
    </location>
</feature>
<feature type="turn" evidence="11">
    <location>
        <begin position="1011"/>
        <end position="1014"/>
    </location>
</feature>
<feature type="helix" evidence="11">
    <location>
        <begin position="1017"/>
        <end position="1021"/>
    </location>
</feature>
<feature type="helix" evidence="11">
    <location>
        <begin position="1025"/>
        <end position="1029"/>
    </location>
</feature>
<feature type="turn" evidence="11">
    <location>
        <begin position="1030"/>
        <end position="1032"/>
    </location>
</feature>
<feature type="helix" evidence="11">
    <location>
        <begin position="1036"/>
        <end position="1047"/>
    </location>
</feature>
<feature type="helix" evidence="11">
    <location>
        <begin position="1049"/>
        <end position="1055"/>
    </location>
</feature>
<sequence length="1095" mass="122735">MLKAESSGERTTLRSASPHRNAYRTEFQALKSTFDKPKPDGEQKTKEGEGSQQSRGRKYGSNVNRIKNLFMQMGMEPNENAAIIAKTRGKGRPSSPQKRMKPKEFVEKTDGSVVKLESSVSERISRFDTMHDGPSYAKFTETRKMFERSGHESGQNNRHSPKKEKAGEAEPQDEWGGSKSNRGSSDSLDSLSPRTEAVSPTVSQLSAVFENSESPGAITPGKAENSNYSVTGHYPLNLPSVTVTNLDTFGRLKDSNSRPSSNKQATDTEEPEKSEAVPVPEVAQKGTSLASLPSEERQLSTEAEDVTAQPDTPDSTDKDSPGEPSAESQAMPKSNTLSRPKEPLEDAEANVVGSEAEQPQRRDLTGGGDLTSPDASASSCGKEVPEDSNSFEGSHVYMHSDYNVYRVRSRYNSDWGETGTEQDEGDDSDENNYYQPDMEYSEIVGLPQEEEIPANRKIKFSCAPIKVFNTYSNEDYDRRNDDVDPVAASAEYELEKRVEKLELFPVELEKDEDGLGISIIGMGVGADAGLEKLGIFVKTVTEGGAAQRDGRIQVNDQIVEVDGISLVGVTQNFAATVLRNTKGNVRFVIGREKPGQVSEVAQLISQTLEQERRQRELLERHYAQYDADDDETGEYATDEEEDEVGPILPGGDMAIEVFELPENEDMFSPSDLDTSKLSHKFKELQIKHAVTEAEIQKLKTKLQAAENEKVRWELEKNQLQQNIEENKERMVKLESYWIEAQTLCHTVNEHLKETQSQYQALEKKYNKAKKLIKDFQQKELDFIRRQEVERKKLEEVEKAHLVEVQGLQVRIRDLEAEVFRLLKQNGTQVNNNNNIFERRPSPGEVSKGDTMENVEVKQTSCQDGLSQDLNEAVPETERLDSKALKTRAQLSVKNRRQRPTRTRLYDSVSSTDGEDSLERKNFTFNDDFSPSSTSSADLSGLGAEPKTPGLSQSLALSSDESLDMIDDEILDDGQSPKHTQSQSRAVHEWSVQQVSHWLVGLSLDQYVSEFSAQNISGEQLLQLDGNKLKALGMTSSQDRALVKKKLKEMKMSLEKARKAQEKMEKQREKLRRKEQEQMQRKSKKSEKMTSTTEQP</sequence>
<reference key="1">
    <citation type="journal article" date="1997" name="J. Cell Biol.">
        <title>Neurabin: a novel neural tissue-specific actin filament-binding protein involved in neurite formation.</title>
        <authorList>
            <person name="Nakanishi H."/>
            <person name="Obaishi H."/>
            <person name="Satoh A."/>
            <person name="Wada M."/>
            <person name="Mandai K."/>
            <person name="Satoh K."/>
            <person name="Nishioka H."/>
            <person name="Matsuura Y."/>
            <person name="Mizoguchi A."/>
            <person name="Takai Y."/>
        </authorList>
    </citation>
    <scope>PROTEIN SEQUENCE OF 4-21; 180-211; 286-311; 467-482; 501-532; 710-715 AND 779-790</scope>
    <source>
        <tissue>Brain</tissue>
    </source>
</reference>
<reference key="2">
    <citation type="journal article" date="1998" name="Proc. Natl. Acad. Sci. U.S.A.">
        <title>Neurabin is a synaptic protein linking p70 S6 kinase and the neuronal cytoskeleton.</title>
        <authorList>
            <person name="Burnett P.E."/>
            <person name="Blackshaw S."/>
            <person name="Lai M.M."/>
            <person name="Qureshi I.A."/>
            <person name="Burnett A.F."/>
            <person name="Sabatini D.M."/>
            <person name="Snyder S.H."/>
        </authorList>
    </citation>
    <scope>NUCLEOTIDE SEQUENCE [MRNA]</scope>
    <scope>CHARACTERIZATION</scope>
    <source>
        <tissue>Brain</tissue>
    </source>
</reference>
<reference key="3">
    <citation type="journal article" date="1999" name="J. Biol. Chem.">
        <title>Brain actin-associated protein phosphatase 1 holoenzymes containing spinophilin, neurabin, and selected catalytic subunit isoforms.</title>
        <authorList>
            <person name="MacMillan L.B."/>
            <person name="Bass M.A."/>
            <person name="Cheng N."/>
            <person name="Howard E.F."/>
            <person name="Tamura M."/>
            <person name="Strack S."/>
            <person name="Wadzinski B.E."/>
            <person name="Colbran R.J."/>
        </authorList>
    </citation>
    <scope>NUCLEOTIDE SEQUENCE [MRNA]</scope>
    <scope>CHARACTERIZATION</scope>
    <source>
        <tissue>Brain</tissue>
    </source>
</reference>
<reference key="4">
    <citation type="journal article" date="1999" name="J. Biol. Chem.">
        <title>Direct interaction of the trans-Golgi network membrane protein, TGN38, with the F-actin binding protein, neurabin.</title>
        <authorList>
            <person name="Stephens D.J."/>
            <person name="Banting G."/>
        </authorList>
    </citation>
    <scope>INTERACTION WITH TGN38</scope>
</reference>
<reference key="5">
    <citation type="journal article" date="1999" name="Biochemistry">
        <title>Regulation of neurabin I interaction with protein phosphatase 1 by phosphorylation.</title>
        <authorList>
            <person name="McAvoy T."/>
            <person name="Allen P.B."/>
            <person name="Obaishi H."/>
            <person name="Nakanishi H."/>
            <person name="Takai Y."/>
            <person name="Greengard P."/>
            <person name="Nairn A.C."/>
            <person name="Hemmings H.C. Jr."/>
        </authorList>
    </citation>
    <scope>INTERACTION WITH PP1</scope>
    <scope>PHOSPHORYLATION AT SER-461</scope>
    <scope>MUTAGENESIS</scope>
    <source>
        <strain>Sprague-Dawley</strain>
    </source>
</reference>
<reference key="6">
    <citation type="journal article" date="2012" name="Nat. Commun.">
        <title>Quantitative maps of protein phosphorylation sites across 14 different rat organs and tissues.</title>
        <authorList>
            <person name="Lundby A."/>
            <person name="Secher A."/>
            <person name="Lage K."/>
            <person name="Nordsborg N.B."/>
            <person name="Dmytriyev A."/>
            <person name="Lundby C."/>
            <person name="Olsen J.V."/>
        </authorList>
    </citation>
    <scope>PHOSPHORYLATION [LARGE SCALE ANALYSIS] AT SER-192; THR-312; SER-372; SER-916; SER-929; SER-957; SER-958; SER-961 AND SER-975</scope>
    <scope>IDENTIFICATION BY MASS SPECTROMETRY [LARGE SCALE ANALYSIS]</scope>
</reference>
<reference key="7">
    <citation type="journal article" date="2010" name="Nat. Struct. Mol. Biol.">
        <title>Spinophilin directs protein phosphatase 1 specificity by blocking substrate binding sites.</title>
        <authorList>
            <person name="Ragusa M.J."/>
            <person name="Dancheck B."/>
            <person name="Critton D.A."/>
            <person name="Nairn A.C."/>
            <person name="Page R."/>
            <person name="Peti W."/>
        </authorList>
    </citation>
    <scope>X-RAY CRYSTALLOGRAPHY (2.2 ANGSTROMS) OF 426-592 IN COMPLEX WITH HUMAN PP1CA</scope>
</reference>
<proteinExistence type="evidence at protein level"/>
<protein>
    <recommendedName>
        <fullName>Neurabin-1</fullName>
    </recommendedName>
    <alternativeName>
        <fullName>Neurabin-I</fullName>
    </alternativeName>
    <alternativeName>
        <fullName>Neural tissue-specific F-actin-binding protein I</fullName>
    </alternativeName>
    <alternativeName>
        <fullName>PP1bp175</fullName>
    </alternativeName>
    <alternativeName>
        <fullName>Protein phosphatase 1 regulatory subunit 9A</fullName>
    </alternativeName>
    <alternativeName>
        <fullName>p180</fullName>
    </alternativeName>
</protein>
<dbReference type="EMBL" id="U72994">
    <property type="protein sequence ID" value="AAC53454.1"/>
    <property type="molecule type" value="mRNA"/>
</dbReference>
<dbReference type="PIR" id="T43275">
    <property type="entry name" value="T43275"/>
</dbReference>
<dbReference type="RefSeq" id="NP_445925.1">
    <property type="nucleotide sequence ID" value="NM_053473.3"/>
</dbReference>
<dbReference type="RefSeq" id="XP_038964409.1">
    <property type="nucleotide sequence ID" value="XM_039108481.2"/>
</dbReference>
<dbReference type="RefSeq" id="XP_063142847.1">
    <property type="nucleotide sequence ID" value="XM_063286777.1"/>
</dbReference>
<dbReference type="PDB" id="2FN5">
    <property type="method" value="NMR"/>
    <property type="chains" value="A=502-592"/>
</dbReference>
<dbReference type="PDB" id="2GLE">
    <property type="method" value="NMR"/>
    <property type="chains" value="A=986-1056"/>
</dbReference>
<dbReference type="PDB" id="3HVQ">
    <property type="method" value="X-ray"/>
    <property type="resolution" value="2.20 A"/>
    <property type="chains" value="C/D=426-592"/>
</dbReference>
<dbReference type="PDBsum" id="2FN5"/>
<dbReference type="PDBsum" id="2GLE"/>
<dbReference type="PDBsum" id="3HVQ"/>
<dbReference type="BMRB" id="O35867"/>
<dbReference type="SMR" id="O35867"/>
<dbReference type="BioGRID" id="250039">
    <property type="interactions" value="6"/>
</dbReference>
<dbReference type="DIP" id="DIP-40850N"/>
<dbReference type="FunCoup" id="O35867">
    <property type="interactions" value="1841"/>
</dbReference>
<dbReference type="IntAct" id="O35867">
    <property type="interactions" value="6"/>
</dbReference>
<dbReference type="MINT" id="O35867"/>
<dbReference type="STRING" id="10116.ENSRNOP00000011756"/>
<dbReference type="GlyGen" id="O35867">
    <property type="glycosylation" value="2 sites"/>
</dbReference>
<dbReference type="iPTMnet" id="O35867"/>
<dbReference type="PhosphoSitePlus" id="O35867"/>
<dbReference type="PaxDb" id="10116-ENSRNOP00000011756"/>
<dbReference type="Ensembl" id="ENSRNOT00000011756.5">
    <property type="protein sequence ID" value="ENSRNOP00000011756.4"/>
    <property type="gene ID" value="ENSRNOG00000008869.7"/>
</dbReference>
<dbReference type="GeneID" id="84685"/>
<dbReference type="KEGG" id="rno:84685"/>
<dbReference type="UCSC" id="RGD:632280">
    <property type="organism name" value="rat"/>
</dbReference>
<dbReference type="AGR" id="RGD:632280"/>
<dbReference type="CTD" id="55607"/>
<dbReference type="RGD" id="632280">
    <property type="gene designation" value="Ppp1r9a"/>
</dbReference>
<dbReference type="eggNOG" id="KOG1945">
    <property type="taxonomic scope" value="Eukaryota"/>
</dbReference>
<dbReference type="GeneTree" id="ENSGT00940000155538"/>
<dbReference type="HOGENOM" id="CLU_007401_0_0_1"/>
<dbReference type="InParanoid" id="O35867"/>
<dbReference type="OrthoDB" id="62701at2759"/>
<dbReference type="PhylomeDB" id="O35867"/>
<dbReference type="EvolutionaryTrace" id="O35867"/>
<dbReference type="PRO" id="PR:O35867"/>
<dbReference type="Proteomes" id="UP000002494">
    <property type="component" value="Chromosome 4"/>
</dbReference>
<dbReference type="Bgee" id="ENSRNOG00000008869">
    <property type="expression patterns" value="Expressed in frontal cortex and 15 other cell types or tissues"/>
</dbReference>
<dbReference type="GO" id="GO:0015629">
    <property type="term" value="C:actin cytoskeleton"/>
    <property type="evidence" value="ECO:0000314"/>
    <property type="project" value="RGD"/>
</dbReference>
<dbReference type="GO" id="GO:0030864">
    <property type="term" value="C:cortical actin cytoskeleton"/>
    <property type="evidence" value="ECO:0000266"/>
    <property type="project" value="RGD"/>
</dbReference>
<dbReference type="GO" id="GO:0005737">
    <property type="term" value="C:cytoplasm"/>
    <property type="evidence" value="ECO:0000318"/>
    <property type="project" value="GO_Central"/>
</dbReference>
<dbReference type="GO" id="GO:0005856">
    <property type="term" value="C:cytoskeleton"/>
    <property type="evidence" value="ECO:0000314"/>
    <property type="project" value="MGI"/>
</dbReference>
<dbReference type="GO" id="GO:0030425">
    <property type="term" value="C:dendrite"/>
    <property type="evidence" value="ECO:0000314"/>
    <property type="project" value="RGD"/>
</dbReference>
<dbReference type="GO" id="GO:0043197">
    <property type="term" value="C:dendritic spine"/>
    <property type="evidence" value="ECO:0000314"/>
    <property type="project" value="RGD"/>
</dbReference>
<dbReference type="GO" id="GO:0044326">
    <property type="term" value="C:dendritic spine neck"/>
    <property type="evidence" value="ECO:0000314"/>
    <property type="project" value="RGD"/>
</dbReference>
<dbReference type="GO" id="GO:0030175">
    <property type="term" value="C:filopodium"/>
    <property type="evidence" value="ECO:0000314"/>
    <property type="project" value="RGD"/>
</dbReference>
<dbReference type="GO" id="GO:0098978">
    <property type="term" value="C:glutamatergic synapse"/>
    <property type="evidence" value="ECO:0000314"/>
    <property type="project" value="SynGO"/>
</dbReference>
<dbReference type="GO" id="GO:0030426">
    <property type="term" value="C:growth cone"/>
    <property type="evidence" value="ECO:0000314"/>
    <property type="project" value="MGI"/>
</dbReference>
<dbReference type="GO" id="GO:1990761">
    <property type="term" value="C:growth cone lamellipodium"/>
    <property type="evidence" value="ECO:0000314"/>
    <property type="project" value="RGD"/>
</dbReference>
<dbReference type="GO" id="GO:0030027">
    <property type="term" value="C:lamellipodium"/>
    <property type="evidence" value="ECO:0000314"/>
    <property type="project" value="RGD"/>
</dbReference>
<dbReference type="GO" id="GO:0031594">
    <property type="term" value="C:neuromuscular junction"/>
    <property type="evidence" value="ECO:0000314"/>
    <property type="project" value="RGD"/>
</dbReference>
<dbReference type="GO" id="GO:0043025">
    <property type="term" value="C:neuronal cell body"/>
    <property type="evidence" value="ECO:0000314"/>
    <property type="project" value="RGD"/>
</dbReference>
<dbReference type="GO" id="GO:0098871">
    <property type="term" value="C:postsynaptic actin cytoskeleton"/>
    <property type="evidence" value="ECO:0000314"/>
    <property type="project" value="SynGO"/>
</dbReference>
<dbReference type="GO" id="GO:0014069">
    <property type="term" value="C:postsynaptic density"/>
    <property type="evidence" value="ECO:0000318"/>
    <property type="project" value="GO_Central"/>
</dbReference>
<dbReference type="GO" id="GO:0051015">
    <property type="term" value="F:actin filament binding"/>
    <property type="evidence" value="ECO:0000314"/>
    <property type="project" value="WormBase"/>
</dbReference>
<dbReference type="GO" id="GO:0051020">
    <property type="term" value="F:GTPase binding"/>
    <property type="evidence" value="ECO:0000314"/>
    <property type="project" value="RGD"/>
</dbReference>
<dbReference type="GO" id="GO:0042802">
    <property type="term" value="F:identical protein binding"/>
    <property type="evidence" value="ECO:0000353"/>
    <property type="project" value="RGD"/>
</dbReference>
<dbReference type="GO" id="GO:0019904">
    <property type="term" value="F:protein domain specific binding"/>
    <property type="evidence" value="ECO:0000314"/>
    <property type="project" value="RGD"/>
</dbReference>
<dbReference type="GO" id="GO:0019901">
    <property type="term" value="F:protein kinase binding"/>
    <property type="evidence" value="ECO:0000353"/>
    <property type="project" value="RGD"/>
</dbReference>
<dbReference type="GO" id="GO:0008157">
    <property type="term" value="F:protein phosphatase 1 binding"/>
    <property type="evidence" value="ECO:0000314"/>
    <property type="project" value="RGD"/>
</dbReference>
<dbReference type="GO" id="GO:0044877">
    <property type="term" value="F:protein-containing complex binding"/>
    <property type="evidence" value="ECO:0000353"/>
    <property type="project" value="RGD"/>
</dbReference>
<dbReference type="GO" id="GO:0044325">
    <property type="term" value="F:transmembrane transporter binding"/>
    <property type="evidence" value="ECO:0000353"/>
    <property type="project" value="RGD"/>
</dbReference>
<dbReference type="GO" id="GO:0007015">
    <property type="term" value="P:actin filament organization"/>
    <property type="evidence" value="ECO:0000266"/>
    <property type="project" value="RGD"/>
</dbReference>
<dbReference type="GO" id="GO:0019722">
    <property type="term" value="P:calcium-mediated signaling"/>
    <property type="evidence" value="ECO:0000266"/>
    <property type="project" value="RGD"/>
</dbReference>
<dbReference type="GO" id="GO:0097237">
    <property type="term" value="P:cellular response to toxic substance"/>
    <property type="evidence" value="ECO:0000314"/>
    <property type="project" value="RGD"/>
</dbReference>
<dbReference type="GO" id="GO:0060079">
    <property type="term" value="P:excitatory postsynaptic potential"/>
    <property type="evidence" value="ECO:0000315"/>
    <property type="project" value="RGD"/>
</dbReference>
<dbReference type="GO" id="GO:0050804">
    <property type="term" value="P:modulation of chemical synaptic transmission"/>
    <property type="evidence" value="ECO:0000266"/>
    <property type="project" value="RGD"/>
</dbReference>
<dbReference type="GO" id="GO:1900272">
    <property type="term" value="P:negative regulation of long-term synaptic potentiation"/>
    <property type="evidence" value="ECO:0000315"/>
    <property type="project" value="RGD"/>
</dbReference>
<dbReference type="GO" id="GO:1904049">
    <property type="term" value="P:negative regulation of spontaneous neurotransmitter secretion"/>
    <property type="evidence" value="ECO:0000315"/>
    <property type="project" value="RGD"/>
</dbReference>
<dbReference type="GO" id="GO:0051497">
    <property type="term" value="P:negative regulation of stress fiber assembly"/>
    <property type="evidence" value="ECO:0000315"/>
    <property type="project" value="RGD"/>
</dbReference>
<dbReference type="GO" id="GO:0048666">
    <property type="term" value="P:neuron development"/>
    <property type="evidence" value="ECO:0000270"/>
    <property type="project" value="RGD"/>
</dbReference>
<dbReference type="GO" id="GO:0031175">
    <property type="term" value="P:neuron projection development"/>
    <property type="evidence" value="ECO:0000314"/>
    <property type="project" value="MGI"/>
</dbReference>
<dbReference type="GO" id="GO:0060999">
    <property type="term" value="P:positive regulation of dendritic spine development"/>
    <property type="evidence" value="ECO:0000315"/>
    <property type="project" value="RGD"/>
</dbReference>
<dbReference type="GO" id="GO:1900454">
    <property type="term" value="P:positive regulation of long-term synaptic depression"/>
    <property type="evidence" value="ECO:0000315"/>
    <property type="project" value="RGD"/>
</dbReference>
<dbReference type="GO" id="GO:0010976">
    <property type="term" value="P:positive regulation of neuron projection development"/>
    <property type="evidence" value="ECO:0000315"/>
    <property type="project" value="RGD"/>
</dbReference>
<dbReference type="GO" id="GO:0098974">
    <property type="term" value="P:postsynaptic actin cytoskeleton organization"/>
    <property type="evidence" value="ECO:0000314"/>
    <property type="project" value="SynGO"/>
</dbReference>
<dbReference type="GO" id="GO:0030833">
    <property type="term" value="P:regulation of actin filament polymerization"/>
    <property type="evidence" value="ECO:0000315"/>
    <property type="project" value="RGD"/>
</dbReference>
<dbReference type="GO" id="GO:0061001">
    <property type="term" value="P:regulation of dendritic spine morphogenesis"/>
    <property type="evidence" value="ECO:0000315"/>
    <property type="project" value="RGD"/>
</dbReference>
<dbReference type="GO" id="GO:0051489">
    <property type="term" value="P:regulation of filopodium assembly"/>
    <property type="evidence" value="ECO:0000315"/>
    <property type="project" value="RGD"/>
</dbReference>
<dbReference type="GO" id="GO:0051963">
    <property type="term" value="P:regulation of synapse assembly"/>
    <property type="evidence" value="ECO:0000315"/>
    <property type="project" value="RGD"/>
</dbReference>
<dbReference type="GO" id="GO:0051823">
    <property type="term" value="P:regulation of synapse structural plasticity"/>
    <property type="evidence" value="ECO:0000315"/>
    <property type="project" value="RGD"/>
</dbReference>
<dbReference type="CDD" id="cd06790">
    <property type="entry name" value="PDZ_neurabin-like"/>
    <property type="match status" value="1"/>
</dbReference>
<dbReference type="CDD" id="cd09512">
    <property type="entry name" value="SAM_Neurabin-like"/>
    <property type="match status" value="1"/>
</dbReference>
<dbReference type="FunFam" id="2.30.42.10:FF:000010">
    <property type="entry name" value="Neurabin-1 isoform 1"/>
    <property type="match status" value="1"/>
</dbReference>
<dbReference type="FunFam" id="1.10.150.50:FF:000008">
    <property type="entry name" value="Neurabin-1 isoform 1-like protein"/>
    <property type="match status" value="1"/>
</dbReference>
<dbReference type="Gene3D" id="2.30.42.10">
    <property type="match status" value="1"/>
</dbReference>
<dbReference type="Gene3D" id="1.10.150.50">
    <property type="entry name" value="Transcription Factor, Ets-1"/>
    <property type="match status" value="1"/>
</dbReference>
<dbReference type="IDEAL" id="IID50060"/>
<dbReference type="InterPro" id="IPR040645">
    <property type="entry name" value="Neurabin-1/2_PDZ"/>
</dbReference>
<dbReference type="InterPro" id="IPR043446">
    <property type="entry name" value="Neurabin-like"/>
</dbReference>
<dbReference type="InterPro" id="IPR001478">
    <property type="entry name" value="PDZ"/>
</dbReference>
<dbReference type="InterPro" id="IPR036034">
    <property type="entry name" value="PDZ_sf"/>
</dbReference>
<dbReference type="InterPro" id="IPR001660">
    <property type="entry name" value="SAM"/>
</dbReference>
<dbReference type="InterPro" id="IPR013761">
    <property type="entry name" value="SAM/pointed_sf"/>
</dbReference>
<dbReference type="PANTHER" id="PTHR16154">
    <property type="entry name" value="NEURABIN"/>
    <property type="match status" value="1"/>
</dbReference>
<dbReference type="PANTHER" id="PTHR16154:SF22">
    <property type="entry name" value="NEURABIN-1"/>
    <property type="match status" value="1"/>
</dbReference>
<dbReference type="Pfam" id="PF00595">
    <property type="entry name" value="PDZ"/>
    <property type="match status" value="1"/>
</dbReference>
<dbReference type="Pfam" id="PF17817">
    <property type="entry name" value="PDZ_5"/>
    <property type="match status" value="1"/>
</dbReference>
<dbReference type="Pfam" id="PF07647">
    <property type="entry name" value="SAM_2"/>
    <property type="match status" value="1"/>
</dbReference>
<dbReference type="SMART" id="SM00228">
    <property type="entry name" value="PDZ"/>
    <property type="match status" value="1"/>
</dbReference>
<dbReference type="SMART" id="SM00454">
    <property type="entry name" value="SAM"/>
    <property type="match status" value="1"/>
</dbReference>
<dbReference type="SUPFAM" id="SSF50156">
    <property type="entry name" value="PDZ domain-like"/>
    <property type="match status" value="1"/>
</dbReference>
<dbReference type="SUPFAM" id="SSF47769">
    <property type="entry name" value="SAM/Pointed domain"/>
    <property type="match status" value="1"/>
</dbReference>
<dbReference type="PROSITE" id="PS50106">
    <property type="entry name" value="PDZ"/>
    <property type="match status" value="1"/>
</dbReference>
<dbReference type="PROSITE" id="PS50105">
    <property type="entry name" value="SAM_DOMAIN"/>
    <property type="match status" value="1"/>
</dbReference>
<comment type="function">
    <text>Binds to actin filaments (F-actin) and shows cross-linking activity. Binds along the sides of the F-actin. May be involved in neurite formation. Inhibits protein phosphatase 1-alpha activity. May play an important role in linking the actin cytoskeleton to the plasma membrane at the synaptic junction.</text>
</comment>
<comment type="subunit">
    <text evidence="6 7 8">Possibly exists as a homodimer, homotrimer or a homotetramer. Interacts with F-actin, protein phosphatase 1 (PP1), neurabin-2, TGN38 and p70-S6K.</text>
</comment>
<comment type="interaction">
    <interactant intactId="EBI-7092421">
        <id>O35867</id>
    </interactant>
    <interactant intactId="EBI-352326">
        <id>P62142</id>
        <label>Ppp1cb</label>
    </interactant>
    <organismsDiffer>false</organismsDiffer>
    <experiments>2</experiments>
</comment>
<comment type="interaction">
    <interactant intactId="EBI-7092421">
        <id>O35867</id>
    </interactant>
    <interactant intactId="EBI-80049">
        <id>P63088</id>
        <label>Ppp1cc</label>
    </interactant>
    <organismsDiffer>false</organismsDiffer>
    <experiments>2</experiments>
</comment>
<comment type="interaction">
    <interactant intactId="EBI-7092421">
        <id>O35867</id>
    </interactant>
    <interactant intactId="EBI-2639458">
        <id>P67999</id>
        <label>Rps6kb1</label>
    </interactant>
    <organismsDiffer>false</organismsDiffer>
    <experiments>4</experiments>
</comment>
<comment type="interaction">
    <interactant intactId="EBI-7092421">
        <id>O35867</id>
    </interactant>
    <interactant intactId="EBI-357253">
        <id>P62136</id>
        <label>PPP1CA</label>
    </interactant>
    <organismsDiffer>true</organismsDiffer>
    <experiments>3</experiments>
</comment>
<comment type="subcellular location">
    <subcellularLocation>
        <location>Cytoplasm</location>
        <location>Cytoskeleton</location>
    </subcellularLocation>
    <subcellularLocation>
        <location>Synapse</location>
        <location>Synaptosome</location>
    </subcellularLocation>
</comment>
<comment type="tissue specificity">
    <text>Brain, and widely expressed in neural tissue. Highly concentrated in synapses of developed neurons. In developing neurons, concentrated in the lamellipodia of the growth cone.</text>
</comment>
<comment type="domain">
    <text>Interacts with p70-S6K via its PDZ domain.</text>
</comment>
<comment type="domain">
    <text>The PP1 binding region is natively unstructured, upon PP1 binding, it acquires structure, blocks a substrate-binding site, and restricts PP1 phosphatase specificity to a subset of substrates.</text>
</comment>
<gene>
    <name type="primary">Ppp1r9a</name>
</gene>
<evidence type="ECO:0000250" key="1">
    <source>
        <dbReference type="UniProtKB" id="Q9ULJ8"/>
    </source>
</evidence>
<evidence type="ECO:0000255" key="2"/>
<evidence type="ECO:0000255" key="3">
    <source>
        <dbReference type="PROSITE-ProRule" id="PRU00143"/>
    </source>
</evidence>
<evidence type="ECO:0000255" key="4">
    <source>
        <dbReference type="PROSITE-ProRule" id="PRU00184"/>
    </source>
</evidence>
<evidence type="ECO:0000256" key="5">
    <source>
        <dbReference type="SAM" id="MobiDB-lite"/>
    </source>
</evidence>
<evidence type="ECO:0000269" key="6">
    <source>
    </source>
</evidence>
<evidence type="ECO:0000269" key="7">
    <source>
    </source>
</evidence>
<evidence type="ECO:0000269" key="8">
    <source>
    </source>
</evidence>
<evidence type="ECO:0007744" key="9">
    <source>
    </source>
</evidence>
<evidence type="ECO:0007829" key="10">
    <source>
        <dbReference type="PDB" id="2FN5"/>
    </source>
</evidence>
<evidence type="ECO:0007829" key="11">
    <source>
        <dbReference type="PDB" id="2GLE"/>
    </source>
</evidence>
<evidence type="ECO:0007829" key="12">
    <source>
        <dbReference type="PDB" id="3HVQ"/>
    </source>
</evidence>